<evidence type="ECO:0000305" key="1"/>
<feature type="chain" id="PRO_0000187414" description="Large ribosomal subunit protein bL34">
    <location>
        <begin position="1"/>
        <end position="48"/>
    </location>
</feature>
<name>RL34_MYCGE</name>
<organism>
    <name type="scientific">Mycoplasma genitalium (strain ATCC 33530 / DSM 19775 / NCTC 10195 / G37)</name>
    <name type="common">Mycoplasmoides genitalium</name>
    <dbReference type="NCBI Taxonomy" id="243273"/>
    <lineage>
        <taxon>Bacteria</taxon>
        <taxon>Bacillati</taxon>
        <taxon>Mycoplasmatota</taxon>
        <taxon>Mycoplasmoidales</taxon>
        <taxon>Mycoplasmoidaceae</taxon>
        <taxon>Mycoplasmoides</taxon>
    </lineage>
</organism>
<proteinExistence type="inferred from homology"/>
<dbReference type="EMBL" id="L43967">
    <property type="protein sequence ID" value="AAC72486.1"/>
    <property type="molecule type" value="Genomic_DNA"/>
</dbReference>
<dbReference type="PIR" id="E64251">
    <property type="entry name" value="E64251"/>
</dbReference>
<dbReference type="RefSeq" id="WP_009885567.1">
    <property type="nucleotide sequence ID" value="NC_000908.2"/>
</dbReference>
<dbReference type="SMR" id="P47704"/>
<dbReference type="FunCoup" id="P47704">
    <property type="interactions" value="111"/>
</dbReference>
<dbReference type="STRING" id="243273.MG_466"/>
<dbReference type="GeneID" id="88282647"/>
<dbReference type="KEGG" id="mge:MG_466"/>
<dbReference type="eggNOG" id="COG0230">
    <property type="taxonomic scope" value="Bacteria"/>
</dbReference>
<dbReference type="HOGENOM" id="CLU_129938_2_0_14"/>
<dbReference type="InParanoid" id="P47704"/>
<dbReference type="OrthoDB" id="9804164at2"/>
<dbReference type="BioCyc" id="MGEN243273:G1GJ2-560-MONOMER"/>
<dbReference type="Proteomes" id="UP000000807">
    <property type="component" value="Chromosome"/>
</dbReference>
<dbReference type="GO" id="GO:1990904">
    <property type="term" value="C:ribonucleoprotein complex"/>
    <property type="evidence" value="ECO:0007669"/>
    <property type="project" value="UniProtKB-KW"/>
</dbReference>
<dbReference type="GO" id="GO:0005840">
    <property type="term" value="C:ribosome"/>
    <property type="evidence" value="ECO:0007669"/>
    <property type="project" value="UniProtKB-KW"/>
</dbReference>
<dbReference type="GO" id="GO:0003735">
    <property type="term" value="F:structural constituent of ribosome"/>
    <property type="evidence" value="ECO:0007669"/>
    <property type="project" value="InterPro"/>
</dbReference>
<dbReference type="GO" id="GO:0006412">
    <property type="term" value="P:translation"/>
    <property type="evidence" value="ECO:0007669"/>
    <property type="project" value="UniProtKB-UniRule"/>
</dbReference>
<dbReference type="FunFam" id="1.10.287.3980:FF:000001">
    <property type="entry name" value="Mitochondrial ribosomal protein L34"/>
    <property type="match status" value="1"/>
</dbReference>
<dbReference type="Gene3D" id="1.10.287.3980">
    <property type="match status" value="1"/>
</dbReference>
<dbReference type="HAMAP" id="MF_00391">
    <property type="entry name" value="Ribosomal_bL34"/>
    <property type="match status" value="1"/>
</dbReference>
<dbReference type="InterPro" id="IPR000271">
    <property type="entry name" value="Ribosomal_bL34"/>
</dbReference>
<dbReference type="InterPro" id="IPR020939">
    <property type="entry name" value="Ribosomal_bL34_CS"/>
</dbReference>
<dbReference type="NCBIfam" id="TIGR01030">
    <property type="entry name" value="rpmH_bact"/>
    <property type="match status" value="1"/>
</dbReference>
<dbReference type="PANTHER" id="PTHR14503:SF4">
    <property type="entry name" value="LARGE RIBOSOMAL SUBUNIT PROTEIN BL34M"/>
    <property type="match status" value="1"/>
</dbReference>
<dbReference type="PANTHER" id="PTHR14503">
    <property type="entry name" value="MITOCHONDRIAL RIBOSOMAL PROTEIN 34 FAMILY MEMBER"/>
    <property type="match status" value="1"/>
</dbReference>
<dbReference type="Pfam" id="PF00468">
    <property type="entry name" value="Ribosomal_L34"/>
    <property type="match status" value="1"/>
</dbReference>
<dbReference type="PROSITE" id="PS00784">
    <property type="entry name" value="RIBOSOMAL_L34"/>
    <property type="match status" value="1"/>
</dbReference>
<gene>
    <name type="primary">rpmH</name>
    <name type="synonym">rpl34</name>
    <name type="ordered locus">MG466</name>
</gene>
<comment type="similarity">
    <text evidence="1">Belongs to the bacterial ribosomal protein bL34 family.</text>
</comment>
<protein>
    <recommendedName>
        <fullName evidence="1">Large ribosomal subunit protein bL34</fullName>
    </recommendedName>
    <alternativeName>
        <fullName>50S ribosomal protein L34</fullName>
    </alternativeName>
</protein>
<sequence>MKRTYQPSKLKRAKTHGFMARMATAQGRKVLRQRRFKNRAQLTVSSER</sequence>
<accession>P47704</accession>
<reference key="1">
    <citation type="journal article" date="1995" name="Science">
        <title>The minimal gene complement of Mycoplasma genitalium.</title>
        <authorList>
            <person name="Fraser C.M."/>
            <person name="Gocayne J.D."/>
            <person name="White O."/>
            <person name="Adams M.D."/>
            <person name="Clayton R.A."/>
            <person name="Fleischmann R.D."/>
            <person name="Bult C.J."/>
            <person name="Kerlavage A.R."/>
            <person name="Sutton G.G."/>
            <person name="Kelley J.M."/>
            <person name="Fritchman J.L."/>
            <person name="Weidman J.F."/>
            <person name="Small K.V."/>
            <person name="Sandusky M."/>
            <person name="Fuhrmann J.L."/>
            <person name="Nguyen D.T."/>
            <person name="Utterback T.R."/>
            <person name="Saudek D.M."/>
            <person name="Phillips C.A."/>
            <person name="Merrick J.M."/>
            <person name="Tomb J.-F."/>
            <person name="Dougherty B.A."/>
            <person name="Bott K.F."/>
            <person name="Hu P.-C."/>
            <person name="Lucier T.S."/>
            <person name="Peterson S.N."/>
            <person name="Smith H.O."/>
            <person name="Hutchison C.A. III"/>
            <person name="Venter J.C."/>
        </authorList>
    </citation>
    <scope>NUCLEOTIDE SEQUENCE [LARGE SCALE GENOMIC DNA]</scope>
    <source>
        <strain>ATCC 33530 / DSM 19775 / NCTC 10195 / G37</strain>
    </source>
</reference>
<keyword id="KW-1185">Reference proteome</keyword>
<keyword id="KW-0687">Ribonucleoprotein</keyword>
<keyword id="KW-0689">Ribosomal protein</keyword>